<gene>
    <name evidence="1" type="primary">ubiC2</name>
    <name type="ordered locus">BURPS1710b_1319</name>
</gene>
<sequence>MRFDAADAHWRETPRPGASSAQKDWLTRGGSLTAHLARLGRVTVRVTRETVAAPWADEHRALSCASRAPVWVREVVLAVDGAPFVAAHSIAPLAASKGVWQAMRRLRTRPLAELLYSDPEVTRSALVSRRVLAGHPLFSLASLALARAYATEHAFAARRSVFERRGTPLMVTECMLPALWRHLDAHGERRARGLEQT</sequence>
<keyword id="KW-0963">Cytoplasm</keyword>
<keyword id="KW-0456">Lyase</keyword>
<keyword id="KW-0670">Pyruvate</keyword>
<keyword id="KW-0831">Ubiquinone biosynthesis</keyword>
<accession>Q3JUM4</accession>
<dbReference type="EC" id="4.1.3.40" evidence="1"/>
<dbReference type="EMBL" id="CP000124">
    <property type="protein sequence ID" value="ABA47638.1"/>
    <property type="status" value="ALT_INIT"/>
    <property type="molecule type" value="Genomic_DNA"/>
</dbReference>
<dbReference type="SMR" id="Q3JUM4"/>
<dbReference type="EnsemblBacteria" id="ABA47638">
    <property type="protein sequence ID" value="ABA47638"/>
    <property type="gene ID" value="BURPS1710b_1319"/>
</dbReference>
<dbReference type="KEGG" id="bpm:BURPS1710b_1319"/>
<dbReference type="HOGENOM" id="CLU_096824_0_0_4"/>
<dbReference type="UniPathway" id="UPA00232"/>
<dbReference type="Proteomes" id="UP000002700">
    <property type="component" value="Chromosome I"/>
</dbReference>
<dbReference type="GO" id="GO:0005829">
    <property type="term" value="C:cytosol"/>
    <property type="evidence" value="ECO:0007669"/>
    <property type="project" value="TreeGrafter"/>
</dbReference>
<dbReference type="GO" id="GO:0008813">
    <property type="term" value="F:chorismate lyase activity"/>
    <property type="evidence" value="ECO:0007669"/>
    <property type="project" value="UniProtKB-UniRule"/>
</dbReference>
<dbReference type="GO" id="GO:0042866">
    <property type="term" value="P:pyruvate biosynthetic process"/>
    <property type="evidence" value="ECO:0007669"/>
    <property type="project" value="UniProtKB-UniRule"/>
</dbReference>
<dbReference type="GO" id="GO:0006744">
    <property type="term" value="P:ubiquinone biosynthetic process"/>
    <property type="evidence" value="ECO:0007669"/>
    <property type="project" value="UniProtKB-UniRule"/>
</dbReference>
<dbReference type="Gene3D" id="3.40.1410.10">
    <property type="entry name" value="Chorismate lyase-like"/>
    <property type="match status" value="1"/>
</dbReference>
<dbReference type="HAMAP" id="MF_01632">
    <property type="entry name" value="UbiC"/>
    <property type="match status" value="1"/>
</dbReference>
<dbReference type="InterPro" id="IPR007440">
    <property type="entry name" value="Chorismate--pyruvate_lyase"/>
</dbReference>
<dbReference type="InterPro" id="IPR028978">
    <property type="entry name" value="Chorismate_lyase_/UTRA_dom_sf"/>
</dbReference>
<dbReference type="PANTHER" id="PTHR38683">
    <property type="entry name" value="CHORISMATE PYRUVATE-LYASE"/>
    <property type="match status" value="1"/>
</dbReference>
<dbReference type="PANTHER" id="PTHR38683:SF1">
    <property type="entry name" value="CHORISMATE PYRUVATE-LYASE"/>
    <property type="match status" value="1"/>
</dbReference>
<dbReference type="Pfam" id="PF04345">
    <property type="entry name" value="Chor_lyase"/>
    <property type="match status" value="1"/>
</dbReference>
<dbReference type="SUPFAM" id="SSF64288">
    <property type="entry name" value="Chorismate lyase-like"/>
    <property type="match status" value="1"/>
</dbReference>
<evidence type="ECO:0000255" key="1">
    <source>
        <dbReference type="HAMAP-Rule" id="MF_01632"/>
    </source>
</evidence>
<evidence type="ECO:0000256" key="2">
    <source>
        <dbReference type="SAM" id="MobiDB-lite"/>
    </source>
</evidence>
<evidence type="ECO:0000305" key="3"/>
<name>UBIC2_BURP1</name>
<proteinExistence type="inferred from homology"/>
<reference key="1">
    <citation type="journal article" date="2010" name="Genome Biol. Evol.">
        <title>Continuing evolution of Burkholderia mallei through genome reduction and large-scale rearrangements.</title>
        <authorList>
            <person name="Losada L."/>
            <person name="Ronning C.M."/>
            <person name="DeShazer D."/>
            <person name="Woods D."/>
            <person name="Fedorova N."/>
            <person name="Kim H.S."/>
            <person name="Shabalina S.A."/>
            <person name="Pearson T.R."/>
            <person name="Brinkac L."/>
            <person name="Tan P."/>
            <person name="Nandi T."/>
            <person name="Crabtree J."/>
            <person name="Badger J."/>
            <person name="Beckstrom-Sternberg S."/>
            <person name="Saqib M."/>
            <person name="Schutzer S.E."/>
            <person name="Keim P."/>
            <person name="Nierman W.C."/>
        </authorList>
    </citation>
    <scope>NUCLEOTIDE SEQUENCE [LARGE SCALE GENOMIC DNA]</scope>
    <source>
        <strain>1710b</strain>
    </source>
</reference>
<comment type="function">
    <text evidence="1">Removes the pyruvyl group from chorismate, with concomitant aromatization of the ring, to provide 4-hydroxybenzoate (4HB) for the ubiquinone pathway.</text>
</comment>
<comment type="catalytic activity">
    <reaction evidence="1">
        <text>chorismate = 4-hydroxybenzoate + pyruvate</text>
        <dbReference type="Rhea" id="RHEA:16505"/>
        <dbReference type="ChEBI" id="CHEBI:15361"/>
        <dbReference type="ChEBI" id="CHEBI:17879"/>
        <dbReference type="ChEBI" id="CHEBI:29748"/>
        <dbReference type="EC" id="4.1.3.40"/>
    </reaction>
</comment>
<comment type="pathway">
    <text evidence="1">Cofactor biosynthesis; ubiquinone biosynthesis.</text>
</comment>
<comment type="subcellular location">
    <subcellularLocation>
        <location evidence="1">Cytoplasm</location>
    </subcellularLocation>
</comment>
<comment type="similarity">
    <text evidence="1">Belongs to the UbiC family.</text>
</comment>
<comment type="sequence caution" evidence="3">
    <conflict type="erroneous initiation">
        <sequence resource="EMBL-CDS" id="ABA47638"/>
    </conflict>
    <text>Extended N-terminus.</text>
</comment>
<organism>
    <name type="scientific">Burkholderia pseudomallei (strain 1710b)</name>
    <dbReference type="NCBI Taxonomy" id="320372"/>
    <lineage>
        <taxon>Bacteria</taxon>
        <taxon>Pseudomonadati</taxon>
        <taxon>Pseudomonadota</taxon>
        <taxon>Betaproteobacteria</taxon>
        <taxon>Burkholderiales</taxon>
        <taxon>Burkholderiaceae</taxon>
        <taxon>Burkholderia</taxon>
        <taxon>pseudomallei group</taxon>
    </lineage>
</organism>
<protein>
    <recommendedName>
        <fullName evidence="1">Probable chorismate pyruvate-lyase 2</fullName>
        <shortName evidence="1">CL 2</shortName>
        <shortName evidence="1">CPL 2</shortName>
        <ecNumber evidence="1">4.1.3.40</ecNumber>
    </recommendedName>
</protein>
<feature type="chain" id="PRO_0000240540" description="Probable chorismate pyruvate-lyase 2">
    <location>
        <begin position="1"/>
        <end position="197"/>
    </location>
</feature>
<feature type="region of interest" description="Disordered" evidence="2">
    <location>
        <begin position="1"/>
        <end position="23"/>
    </location>
</feature>
<feature type="compositionally biased region" description="Basic and acidic residues" evidence="2">
    <location>
        <begin position="1"/>
        <end position="14"/>
    </location>
</feature>
<feature type="binding site" evidence="1">
    <location>
        <position position="73"/>
    </location>
    <ligand>
        <name>substrate</name>
    </ligand>
</feature>
<feature type="binding site" evidence="1">
    <location>
        <position position="111"/>
    </location>
    <ligand>
        <name>substrate</name>
    </ligand>
</feature>
<feature type="binding site" evidence="1">
    <location>
        <position position="173"/>
    </location>
    <ligand>
        <name>substrate</name>
    </ligand>
</feature>